<reference key="1">
    <citation type="submission" date="2008-01" db="EMBL/GenBank/DDBJ databases">
        <title>Complete sequence of Shewanella halifaxensis HAW-EB4.</title>
        <authorList>
            <consortium name="US DOE Joint Genome Institute"/>
            <person name="Copeland A."/>
            <person name="Lucas S."/>
            <person name="Lapidus A."/>
            <person name="Glavina del Rio T."/>
            <person name="Dalin E."/>
            <person name="Tice H."/>
            <person name="Bruce D."/>
            <person name="Goodwin L."/>
            <person name="Pitluck S."/>
            <person name="Sims D."/>
            <person name="Brettin T."/>
            <person name="Detter J.C."/>
            <person name="Han C."/>
            <person name="Kuske C.R."/>
            <person name="Schmutz J."/>
            <person name="Larimer F."/>
            <person name="Land M."/>
            <person name="Hauser L."/>
            <person name="Kyrpides N."/>
            <person name="Kim E."/>
            <person name="Zhao J.-S."/>
            <person name="Richardson P."/>
        </authorList>
    </citation>
    <scope>NUCLEOTIDE SEQUENCE [LARGE SCALE GENOMIC DNA]</scope>
    <source>
        <strain>HAW-EB4</strain>
    </source>
</reference>
<protein>
    <recommendedName>
        <fullName evidence="1">Small ribosomal subunit protein uS2</fullName>
    </recommendedName>
    <alternativeName>
        <fullName evidence="2">30S ribosomal protein S2</fullName>
    </alternativeName>
</protein>
<proteinExistence type="inferred from homology"/>
<feature type="chain" id="PRO_1000078900" description="Small ribosomal subunit protein uS2">
    <location>
        <begin position="1"/>
        <end position="242"/>
    </location>
</feature>
<name>RS2_SHEHH</name>
<organism>
    <name type="scientific">Shewanella halifaxensis (strain HAW-EB4)</name>
    <dbReference type="NCBI Taxonomy" id="458817"/>
    <lineage>
        <taxon>Bacteria</taxon>
        <taxon>Pseudomonadati</taxon>
        <taxon>Pseudomonadota</taxon>
        <taxon>Gammaproteobacteria</taxon>
        <taxon>Alteromonadales</taxon>
        <taxon>Shewanellaceae</taxon>
        <taxon>Shewanella</taxon>
    </lineage>
</organism>
<accession>B0TP83</accession>
<evidence type="ECO:0000255" key="1">
    <source>
        <dbReference type="HAMAP-Rule" id="MF_00291"/>
    </source>
</evidence>
<evidence type="ECO:0000305" key="2"/>
<dbReference type="EMBL" id="CP000931">
    <property type="protein sequence ID" value="ABZ77530.1"/>
    <property type="molecule type" value="Genomic_DNA"/>
</dbReference>
<dbReference type="RefSeq" id="WP_012278056.1">
    <property type="nucleotide sequence ID" value="NC_010334.1"/>
</dbReference>
<dbReference type="SMR" id="B0TP83"/>
<dbReference type="STRING" id="458817.Shal_2981"/>
<dbReference type="KEGG" id="shl:Shal_2981"/>
<dbReference type="eggNOG" id="COG0052">
    <property type="taxonomic scope" value="Bacteria"/>
</dbReference>
<dbReference type="HOGENOM" id="CLU_040318_1_2_6"/>
<dbReference type="OrthoDB" id="9808036at2"/>
<dbReference type="Proteomes" id="UP000001317">
    <property type="component" value="Chromosome"/>
</dbReference>
<dbReference type="GO" id="GO:0022627">
    <property type="term" value="C:cytosolic small ribosomal subunit"/>
    <property type="evidence" value="ECO:0007669"/>
    <property type="project" value="TreeGrafter"/>
</dbReference>
<dbReference type="GO" id="GO:0003735">
    <property type="term" value="F:structural constituent of ribosome"/>
    <property type="evidence" value="ECO:0007669"/>
    <property type="project" value="InterPro"/>
</dbReference>
<dbReference type="GO" id="GO:0006412">
    <property type="term" value="P:translation"/>
    <property type="evidence" value="ECO:0007669"/>
    <property type="project" value="UniProtKB-UniRule"/>
</dbReference>
<dbReference type="CDD" id="cd01425">
    <property type="entry name" value="RPS2"/>
    <property type="match status" value="1"/>
</dbReference>
<dbReference type="FunFam" id="1.10.287.610:FF:000001">
    <property type="entry name" value="30S ribosomal protein S2"/>
    <property type="match status" value="1"/>
</dbReference>
<dbReference type="Gene3D" id="3.40.50.10490">
    <property type="entry name" value="Glucose-6-phosphate isomerase like protein, domain 1"/>
    <property type="match status" value="1"/>
</dbReference>
<dbReference type="Gene3D" id="1.10.287.610">
    <property type="entry name" value="Helix hairpin bin"/>
    <property type="match status" value="1"/>
</dbReference>
<dbReference type="HAMAP" id="MF_00291_B">
    <property type="entry name" value="Ribosomal_uS2_B"/>
    <property type="match status" value="1"/>
</dbReference>
<dbReference type="InterPro" id="IPR001865">
    <property type="entry name" value="Ribosomal_uS2"/>
</dbReference>
<dbReference type="InterPro" id="IPR005706">
    <property type="entry name" value="Ribosomal_uS2_bac/mit/plastid"/>
</dbReference>
<dbReference type="InterPro" id="IPR018130">
    <property type="entry name" value="Ribosomal_uS2_CS"/>
</dbReference>
<dbReference type="InterPro" id="IPR023591">
    <property type="entry name" value="Ribosomal_uS2_flav_dom_sf"/>
</dbReference>
<dbReference type="NCBIfam" id="TIGR01011">
    <property type="entry name" value="rpsB_bact"/>
    <property type="match status" value="1"/>
</dbReference>
<dbReference type="PANTHER" id="PTHR12534">
    <property type="entry name" value="30S RIBOSOMAL PROTEIN S2 PROKARYOTIC AND ORGANELLAR"/>
    <property type="match status" value="1"/>
</dbReference>
<dbReference type="PANTHER" id="PTHR12534:SF0">
    <property type="entry name" value="SMALL RIBOSOMAL SUBUNIT PROTEIN US2M"/>
    <property type="match status" value="1"/>
</dbReference>
<dbReference type="Pfam" id="PF00318">
    <property type="entry name" value="Ribosomal_S2"/>
    <property type="match status" value="1"/>
</dbReference>
<dbReference type="PRINTS" id="PR00395">
    <property type="entry name" value="RIBOSOMALS2"/>
</dbReference>
<dbReference type="SUPFAM" id="SSF52313">
    <property type="entry name" value="Ribosomal protein S2"/>
    <property type="match status" value="1"/>
</dbReference>
<dbReference type="PROSITE" id="PS00962">
    <property type="entry name" value="RIBOSOMAL_S2_1"/>
    <property type="match status" value="1"/>
</dbReference>
<dbReference type="PROSITE" id="PS00963">
    <property type="entry name" value="RIBOSOMAL_S2_2"/>
    <property type="match status" value="1"/>
</dbReference>
<comment type="similarity">
    <text evidence="1">Belongs to the universal ribosomal protein uS2 family.</text>
</comment>
<keyword id="KW-0687">Ribonucleoprotein</keyword>
<keyword id="KW-0689">Ribosomal protein</keyword>
<gene>
    <name evidence="1" type="primary">rpsB</name>
    <name type="ordered locus">Shal_2981</name>
</gene>
<sequence>MTTVSMREMLQAGVHFGHQTRYWNPKMKPFIFGARNGVHIINLEHTVPMFNEALAFISNVASKKGKVLFVGTKRAASEAIKEAAVSCDQFYVDHRWLGGMLTNWKTVRQSIKRLKDLESQSVDGTFDKLTKKEALMRTRELDKLEKSLGGIKNMAGLPDVIFVIGADHEHIAIKEANNLGIPVVAVVDTNSSPDGINYIIPGNDDAMRSIRLYTGSVAAAAKAGRGQDLAVQAEQDGFVEAE</sequence>